<comment type="function">
    <text evidence="1">Essential factor involved in transcription-coupled nucleotide excision repair (TC-NER), a process during which RNA polymerase II-blocking lesions are rapidly removed from the transcribed strand of active genes. Plays a central role in the initiation of the TC-NER process: specifically recognizes and binds RNA polymerase II stalled at a lesion, and mediates recruitment of ERCC8/CSA, initiating DNA damage excision by TFIIH recruitment. Upon DNA-binding, it locally modifies DNA conformation by wrapping the DNA around itself, thereby modifying the interface between stalled RNA polymerase II and DNA. Acts as a chromatin remodeler at DSBs; DNA-dependent ATPase-dependent activity is essential for this function. Plays an important role in regulating the choice of the DNA double-strand breaks (DSBs) repair pathway and G2/M checkpoint activation; DNA-dependent ATPase activity is essential for this function. Regulates the DNA repair pathway choice by inhibiting non-homologous end joining (NHEJ), thereby promoting the homologous recombination (HR)-mediated repair of DSBs during the S/G2 phases of the cell cycle. Mediates the activation of the ATM- and CHEK2-dependent DNA damage responses thus preventing premature entry of cells into mitosis following the induction of DNA DSBs. Remodels chromatin by evicting histones from chromatin flanking DSBs, limiting RIF1 accumulation at DSBs thereby promoting BRCA1-mediated HR. Required for stable recruitment of ELOA and CUL5 to DNA damage sites. Also involved in UV-induced translocation of ERCC8 to the nuclear matrix. Essential for neuronal differentiation and neuritogenesis; regulates transcription and chromatin remodeling activities required during neurogenesis.</text>
</comment>
<comment type="catalytic activity">
    <reaction evidence="1">
        <text>ATP + H2O = ADP + phosphate + H(+)</text>
        <dbReference type="Rhea" id="RHEA:13065"/>
        <dbReference type="ChEBI" id="CHEBI:15377"/>
        <dbReference type="ChEBI" id="CHEBI:15378"/>
        <dbReference type="ChEBI" id="CHEBI:30616"/>
        <dbReference type="ChEBI" id="CHEBI:43474"/>
        <dbReference type="ChEBI" id="CHEBI:456216"/>
    </reaction>
</comment>
<comment type="subunit">
    <text evidence="1">Homodimer (By similarity). Binds DNA (By similarity). Interacts with ERCC8 (By similarity). Interacts with RNA polymerase II; interaction is enhanced by UV irradiation (By similarity). Component of the B-WICH complex, at least composed of SMARCA5/SNF2H, BAZ1B/WSTF, SF3B1, DEK, MYO1C, ERCC6, MYBBP1A and DDX21 (By similarity). Interacts with KIAA1530/UVSSA (By similarity). Interacts with ELOA and CUL5; the interaction is induced by DNA damaging agents or by inhibitors of RNA polymerase II elongation (By similarity). Interacts (via WHD region) with RIF1 (By similarity). Interacts with SMARCC2/BAF170, SMARCB1/BAF47 and the neuron-specific chromatin remodeling complex (nBAF complex) (By similarity). Interacts with ERCC5/XPG (via C-terminus); the interaction stimulates ERCC6/CSB binding to DNA repair bubble and ERCC6/CSB ATPase activity (By similarity). May form a complex composed of RNA polymerase II, ERCC6/CSB and ERCC5/XPG which associates with the DNA repair bubble during transcription-coupled nucleotide excision repair (By similarity). Interacts with CAND1, CSTF1, DDX3X, DDX5, DDX17, DDX23, DHX36, HDAC1, HNRNPU, MTA2, PRPF3, PSMD3, RBBP4, SFPQ, SMARCA1, SMARCA2, TOP1, USP7 and XRCC5 (By similarity).</text>
</comment>
<comment type="subcellular location">
    <subcellularLocation>
        <location evidence="1">Nucleus</location>
    </subcellularLocation>
    <subcellularLocation>
        <location evidence="1">Chromosome</location>
    </subcellularLocation>
    <text evidence="1">Recognizes and binds RNA polymerase II stalled at DNA damage sites.</text>
</comment>
<comment type="domain">
    <text evidence="1">The CSA-interacting motif (CIM) mediates interaction and recruitment of ERCC8/CSA.</text>
</comment>
<comment type="domain">
    <text evidence="1">A C-terminal ubiquitin-binding domain (UBD) is essential for transcription-coupled nucleotide excision repair activity, interaction with RNA polymerase II, association with chromatin after UV irradiation and for mediating the UV-induced translocation of ERRC8 to the nuclear matrix.</text>
</comment>
<comment type="domain">
    <text evidence="1">The N-terminal domain exerts an inhibitory effect on the helicase ATP-binding domain in such a manner that its ATPase activity is restricted (By similarity). Phosphorylation at Ser-158 promotes the intramolecular interaction of the N-terminal domain with the helicase ATP-binding domain, thereby probably releasing the inhibitory effect of the N-terminal domain on its ATPase activity (By similarity).</text>
</comment>
<comment type="PTM">
    <text evidence="1">Phosphorylated in a cell cycle-dependent manner at Ser-158 by cyclin A-CDK2 in response to DNA damage (By similarity). Phosphorylation at this site promotes the intramolecular interaction of the N-terminal domain with the helicase ATP-binding domain, thereby probably releasing the inhibitory effect of the N-terminal domain on its ATPase activity (By similarity). Phosphorylation is essential for its chromatin remodeling activity (By similarity).</text>
</comment>
<comment type="PTM">
    <text evidence="1">Ubiquitinated at the C-terminus (By similarity). Ubiquitination by the CSA complex leads to ERCC6 proteasomal degradation in a UV-dependent manner (By similarity). Stabilized following interaction with KIAA1530/UVSSA, which promotes recruitment of deubiquitinating enzyme USP7, leading to deubiquitination of ERCC6 thereby preventing UV-induced degradation of ERCC6 by the proteasome (By similarity).</text>
</comment>
<comment type="similarity">
    <text evidence="5">Belongs to the SNF2/RAD54 helicase family.</text>
</comment>
<feature type="chain" id="PRO_0000448242" description="DNA excision repair protein ERCC-6">
    <location>
        <begin position="1"/>
        <end position="1481"/>
    </location>
</feature>
<feature type="domain" description="Helicase ATP-binding" evidence="2">
    <location>
        <begin position="515"/>
        <end position="691"/>
    </location>
</feature>
<feature type="domain" description="Helicase C-terminal" evidence="3">
    <location>
        <begin position="839"/>
        <end position="998"/>
    </location>
</feature>
<feature type="region of interest" description="N-terminal domain; essential for its chromatin remodeling activity" evidence="1">
    <location>
        <begin position="1"/>
        <end position="506"/>
    </location>
</feature>
<feature type="region of interest" description="Disordered" evidence="4">
    <location>
        <begin position="309"/>
        <end position="452"/>
    </location>
</feature>
<feature type="region of interest" description="Disordered" evidence="4">
    <location>
        <begin position="1040"/>
        <end position="1096"/>
    </location>
</feature>
<feature type="region of interest" description="Disordered" evidence="4">
    <location>
        <begin position="1114"/>
        <end position="1238"/>
    </location>
</feature>
<feature type="region of interest" description="Disordered" evidence="4">
    <location>
        <begin position="1307"/>
        <end position="1372"/>
    </location>
</feature>
<feature type="region of interest" description="Ubiquitin-binding domain (UBD)" evidence="1">
    <location>
        <begin position="1387"/>
        <end position="1416"/>
    </location>
</feature>
<feature type="region of interest" description="Winged-helix domain (WHD)" evidence="1">
    <location>
        <begin position="1417"/>
        <end position="1481"/>
    </location>
</feature>
<feature type="region of interest" description="Essential for its interaction with RNA polymerase II, transcription-coupled nucleotide excision repair activity, association with chromatin after UV irradiation and for mediating the UV-induced translocation of ERRC8 to the nuclear matrix" evidence="1">
    <location>
        <begin position="1434"/>
        <end position="1481"/>
    </location>
</feature>
<feature type="short sequence motif" description="DEAH box" evidence="2">
    <location>
        <begin position="642"/>
        <end position="645"/>
    </location>
</feature>
<feature type="short sequence motif" description="CSA-interacting motif (CIM)" evidence="1">
    <location>
        <begin position="1373"/>
        <end position="1385"/>
    </location>
</feature>
<feature type="compositionally biased region" description="Basic residues" evidence="4">
    <location>
        <begin position="327"/>
        <end position="337"/>
    </location>
</feature>
<feature type="compositionally biased region" description="Basic and acidic residues" evidence="4">
    <location>
        <begin position="353"/>
        <end position="363"/>
    </location>
</feature>
<feature type="compositionally biased region" description="Acidic residues" evidence="4">
    <location>
        <begin position="378"/>
        <end position="390"/>
    </location>
</feature>
<feature type="compositionally biased region" description="Acidic residues" evidence="4">
    <location>
        <begin position="420"/>
        <end position="435"/>
    </location>
</feature>
<feature type="compositionally biased region" description="Polar residues" evidence="4">
    <location>
        <begin position="1138"/>
        <end position="1147"/>
    </location>
</feature>
<feature type="compositionally biased region" description="Basic residues" evidence="4">
    <location>
        <begin position="1192"/>
        <end position="1201"/>
    </location>
</feature>
<feature type="compositionally biased region" description="Basic and acidic residues" evidence="4">
    <location>
        <begin position="1202"/>
        <end position="1212"/>
    </location>
</feature>
<feature type="compositionally biased region" description="Polar residues" evidence="4">
    <location>
        <begin position="1330"/>
        <end position="1345"/>
    </location>
</feature>
<feature type="compositionally biased region" description="Basic and acidic residues" evidence="4">
    <location>
        <begin position="1346"/>
        <end position="1364"/>
    </location>
</feature>
<feature type="binding site" evidence="2">
    <location>
        <begin position="528"/>
        <end position="535"/>
    </location>
    <ligand>
        <name>ATP</name>
        <dbReference type="ChEBI" id="CHEBI:30616"/>
    </ligand>
</feature>
<feature type="modified residue" description="Phosphoserine; by CDK2" evidence="1">
    <location>
        <position position="158"/>
    </location>
</feature>
<feature type="modified residue" description="N6-methylated lysine; by EHMT2" evidence="1">
    <location>
        <position position="170"/>
    </location>
</feature>
<feature type="modified residue" description="N6-methylated lysine; by EHMT2" evidence="1">
    <location>
        <position position="298"/>
    </location>
</feature>
<feature type="modified residue" description="Phosphoserine" evidence="1">
    <location>
        <position position="428"/>
    </location>
</feature>
<feature type="modified residue" description="Phosphoserine" evidence="1">
    <location>
        <position position="429"/>
    </location>
</feature>
<feature type="modified residue" description="N6-methylated lysine; by EHMT2" evidence="1">
    <location>
        <position position="444"/>
    </location>
</feature>
<feature type="modified residue" description="Phosphoserine" evidence="1">
    <location>
        <position position="482"/>
    </location>
</feature>
<feature type="modified residue" description="Phosphoserine" evidence="1">
    <location>
        <position position="485"/>
    </location>
</feature>
<feature type="modified residue" description="N6-methylated lysine; by EHMT2" evidence="1">
    <location>
        <position position="1047"/>
    </location>
</feature>
<feature type="cross-link" description="Glycyl lysine isopeptide (Lys-Gly) (interchain with G-Cter in SUMO2)" evidence="1">
    <location>
        <position position="256"/>
    </location>
</feature>
<organism>
    <name type="scientific">Mus musculus</name>
    <name type="common">Mouse</name>
    <dbReference type="NCBI Taxonomy" id="10090"/>
    <lineage>
        <taxon>Eukaryota</taxon>
        <taxon>Metazoa</taxon>
        <taxon>Chordata</taxon>
        <taxon>Craniata</taxon>
        <taxon>Vertebrata</taxon>
        <taxon>Euteleostomi</taxon>
        <taxon>Mammalia</taxon>
        <taxon>Eutheria</taxon>
        <taxon>Euarchontoglires</taxon>
        <taxon>Glires</taxon>
        <taxon>Rodentia</taxon>
        <taxon>Myomorpha</taxon>
        <taxon>Muroidea</taxon>
        <taxon>Muridae</taxon>
        <taxon>Murinae</taxon>
        <taxon>Mus</taxon>
        <taxon>Mus</taxon>
    </lineage>
</organism>
<gene>
    <name type="primary">Ercc6</name>
    <name type="synonym">Csb</name>
</gene>
<dbReference type="EC" id="3.6.4.-" evidence="1"/>
<dbReference type="EMBL" id="AC154412">
    <property type="status" value="NOT_ANNOTATED_CDS"/>
    <property type="molecule type" value="Genomic_DNA"/>
</dbReference>
<dbReference type="EMBL" id="BC132447">
    <property type="protein sequence ID" value="AAI32448.1"/>
    <property type="molecule type" value="mRNA"/>
</dbReference>
<dbReference type="CCDS" id="CCDS36868.1"/>
<dbReference type="RefSeq" id="NP_001074690.1">
    <property type="nucleotide sequence ID" value="NM_001081221.2"/>
</dbReference>
<dbReference type="RefSeq" id="XP_006519183.1">
    <property type="nucleotide sequence ID" value="XM_006519120.3"/>
</dbReference>
<dbReference type="SMR" id="F8VPZ5"/>
<dbReference type="ComplexPortal" id="CPX-1133">
    <property type="entry name" value="B-WICH chromatin remodelling complex"/>
</dbReference>
<dbReference type="FunCoup" id="F8VPZ5">
    <property type="interactions" value="3976"/>
</dbReference>
<dbReference type="STRING" id="10090.ENSMUSP00000066256"/>
<dbReference type="iPTMnet" id="F8VPZ5"/>
<dbReference type="PhosphoSitePlus" id="F8VPZ5"/>
<dbReference type="PaxDb" id="10090-ENSMUSP00000066256"/>
<dbReference type="ProteomicsDB" id="363699"/>
<dbReference type="Antibodypedia" id="34972">
    <property type="antibodies" value="410 antibodies from 35 providers"/>
</dbReference>
<dbReference type="DNASU" id="319955"/>
<dbReference type="Ensembl" id="ENSMUST00000066807.8">
    <property type="protein sequence ID" value="ENSMUSP00000066256.7"/>
    <property type="gene ID" value="ENSMUSG00000054051.8"/>
</dbReference>
<dbReference type="GeneID" id="319955"/>
<dbReference type="KEGG" id="mmu:319955"/>
<dbReference type="UCSC" id="uc007sze.1">
    <property type="organism name" value="mouse"/>
</dbReference>
<dbReference type="AGR" id="MGI:1100494"/>
<dbReference type="CTD" id="2074"/>
<dbReference type="MGI" id="MGI:1100494">
    <property type="gene designation" value="Ercc6"/>
</dbReference>
<dbReference type="VEuPathDB" id="HostDB:ENSMUSG00000054051"/>
<dbReference type="eggNOG" id="KOG0387">
    <property type="taxonomic scope" value="Eukaryota"/>
</dbReference>
<dbReference type="GeneTree" id="ENSGT00940000158057"/>
<dbReference type="HOGENOM" id="CLU_000315_7_2_1"/>
<dbReference type="InParanoid" id="F8VPZ5"/>
<dbReference type="OMA" id="CNITPCQ"/>
<dbReference type="OrthoDB" id="413460at2759"/>
<dbReference type="PhylomeDB" id="F8VPZ5"/>
<dbReference type="TreeFam" id="TF101236"/>
<dbReference type="Reactome" id="R-MMU-5250924">
    <property type="pathway name" value="B-WICH complex positively regulates rRNA expression"/>
</dbReference>
<dbReference type="Reactome" id="R-MMU-6781823">
    <property type="pathway name" value="Formation of TC-NER Pre-Incision Complex"/>
</dbReference>
<dbReference type="Reactome" id="R-MMU-6782135">
    <property type="pathway name" value="Dual incision in TC-NER"/>
</dbReference>
<dbReference type="Reactome" id="R-MMU-6782210">
    <property type="pathway name" value="Gap-filling DNA repair synthesis and ligation in TC-NER"/>
</dbReference>
<dbReference type="Reactome" id="R-MMU-73762">
    <property type="pathway name" value="RNA Polymerase I Transcription Initiation"/>
</dbReference>
<dbReference type="BioGRID-ORCS" id="319955">
    <property type="hits" value="7 hits in 116 CRISPR screens"/>
</dbReference>
<dbReference type="PRO" id="PR:F8VPZ5"/>
<dbReference type="Proteomes" id="UP000000589">
    <property type="component" value="Chromosome 14"/>
</dbReference>
<dbReference type="RNAct" id="F8VPZ5">
    <property type="molecule type" value="protein"/>
</dbReference>
<dbReference type="Bgee" id="ENSMUSG00000054051">
    <property type="expression patterns" value="Expressed in superior cervical ganglion and 169 other cell types or tissues"/>
</dbReference>
<dbReference type="ExpressionAtlas" id="F8VPZ5">
    <property type="expression patterns" value="baseline and differential"/>
</dbReference>
<dbReference type="GO" id="GO:0110016">
    <property type="term" value="C:B-WICH complex"/>
    <property type="evidence" value="ECO:0000266"/>
    <property type="project" value="ComplexPortal"/>
</dbReference>
<dbReference type="GO" id="GO:0005730">
    <property type="term" value="C:nucleolus"/>
    <property type="evidence" value="ECO:0000266"/>
    <property type="project" value="MGI"/>
</dbReference>
<dbReference type="GO" id="GO:0005634">
    <property type="term" value="C:nucleus"/>
    <property type="evidence" value="ECO:0000266"/>
    <property type="project" value="MGI"/>
</dbReference>
<dbReference type="GO" id="GO:0090734">
    <property type="term" value="C:site of DNA damage"/>
    <property type="evidence" value="ECO:0000250"/>
    <property type="project" value="UniProtKB"/>
</dbReference>
<dbReference type="GO" id="GO:0008023">
    <property type="term" value="C:transcription elongation factor complex"/>
    <property type="evidence" value="ECO:0007669"/>
    <property type="project" value="Ensembl"/>
</dbReference>
<dbReference type="GO" id="GO:0005524">
    <property type="term" value="F:ATP binding"/>
    <property type="evidence" value="ECO:0007669"/>
    <property type="project" value="UniProtKB-KW"/>
</dbReference>
<dbReference type="GO" id="GO:0016887">
    <property type="term" value="F:ATP hydrolysis activity"/>
    <property type="evidence" value="ECO:0007669"/>
    <property type="project" value="RHEA"/>
</dbReference>
<dbReference type="GO" id="GO:0008094">
    <property type="term" value="F:ATP-dependent activity, acting on DNA"/>
    <property type="evidence" value="ECO:0000250"/>
    <property type="project" value="UniProtKB"/>
</dbReference>
<dbReference type="GO" id="GO:0140658">
    <property type="term" value="F:ATP-dependent chromatin remodeler activity"/>
    <property type="evidence" value="ECO:0000250"/>
    <property type="project" value="UniProtKB"/>
</dbReference>
<dbReference type="GO" id="GO:0140664">
    <property type="term" value="F:ATP-dependent DNA damage sensor activity"/>
    <property type="evidence" value="ECO:0007669"/>
    <property type="project" value="Ensembl"/>
</dbReference>
<dbReference type="GO" id="GO:0003682">
    <property type="term" value="F:chromatin binding"/>
    <property type="evidence" value="ECO:0000250"/>
    <property type="project" value="UniProtKB"/>
</dbReference>
<dbReference type="GO" id="GO:0140463">
    <property type="term" value="F:chromatin-protein adaptor activity"/>
    <property type="evidence" value="ECO:0000250"/>
    <property type="project" value="UniProtKB"/>
</dbReference>
<dbReference type="GO" id="GO:0003677">
    <property type="term" value="F:DNA binding"/>
    <property type="evidence" value="ECO:0007669"/>
    <property type="project" value="UniProtKB-KW"/>
</dbReference>
<dbReference type="GO" id="GO:0004386">
    <property type="term" value="F:helicase activity"/>
    <property type="evidence" value="ECO:0007669"/>
    <property type="project" value="UniProtKB-KW"/>
</dbReference>
<dbReference type="GO" id="GO:0030296">
    <property type="term" value="F:protein tyrosine kinase activator activity"/>
    <property type="evidence" value="ECO:0000266"/>
    <property type="project" value="MGI"/>
</dbReference>
<dbReference type="GO" id="GO:0006284">
    <property type="term" value="P:base-excision repair"/>
    <property type="evidence" value="ECO:0007669"/>
    <property type="project" value="Ensembl"/>
</dbReference>
<dbReference type="GO" id="GO:0006338">
    <property type="term" value="P:chromatin remodeling"/>
    <property type="evidence" value="ECO:0000303"/>
    <property type="project" value="ComplexPortal"/>
</dbReference>
<dbReference type="GO" id="GO:0000077">
    <property type="term" value="P:DNA damage checkpoint signaling"/>
    <property type="evidence" value="ECO:0000250"/>
    <property type="project" value="UniProtKB"/>
</dbReference>
<dbReference type="GO" id="GO:0006974">
    <property type="term" value="P:DNA damage response"/>
    <property type="evidence" value="ECO:0000315"/>
    <property type="project" value="MGI"/>
</dbReference>
<dbReference type="GO" id="GO:0042262">
    <property type="term" value="P:DNA protection"/>
    <property type="evidence" value="ECO:0007669"/>
    <property type="project" value="Ensembl"/>
</dbReference>
<dbReference type="GO" id="GO:0006281">
    <property type="term" value="P:DNA repair"/>
    <property type="evidence" value="ECO:0000315"/>
    <property type="project" value="MGI"/>
</dbReference>
<dbReference type="GO" id="GO:0097680">
    <property type="term" value="P:double-strand break repair via classical nonhomologous end joining"/>
    <property type="evidence" value="ECO:0000250"/>
    <property type="project" value="UniProtKB"/>
</dbReference>
<dbReference type="GO" id="GO:0008630">
    <property type="term" value="P:intrinsic apoptotic signaling pathway in response to DNA damage"/>
    <property type="evidence" value="ECO:0000315"/>
    <property type="project" value="MGI"/>
</dbReference>
<dbReference type="GO" id="GO:0007254">
    <property type="term" value="P:JNK cascade"/>
    <property type="evidence" value="ECO:0000315"/>
    <property type="project" value="MGI"/>
</dbReference>
<dbReference type="GO" id="GO:0035264">
    <property type="term" value="P:multicellular organism growth"/>
    <property type="evidence" value="ECO:0000316"/>
    <property type="project" value="MGI"/>
</dbReference>
<dbReference type="GO" id="GO:2001033">
    <property type="term" value="P:negative regulation of double-strand break repair via nonhomologous end joining"/>
    <property type="evidence" value="ECO:0000250"/>
    <property type="project" value="UniProtKB"/>
</dbReference>
<dbReference type="GO" id="GO:0022008">
    <property type="term" value="P:neurogenesis"/>
    <property type="evidence" value="ECO:0000250"/>
    <property type="project" value="UniProtKB"/>
</dbReference>
<dbReference type="GO" id="GO:0030182">
    <property type="term" value="P:neuron differentiation"/>
    <property type="evidence" value="ECO:0000250"/>
    <property type="project" value="UniProtKB"/>
</dbReference>
<dbReference type="GO" id="GO:0031175">
    <property type="term" value="P:neuron projection development"/>
    <property type="evidence" value="ECO:0000250"/>
    <property type="project" value="UniProtKB"/>
</dbReference>
<dbReference type="GO" id="GO:0045494">
    <property type="term" value="P:photoreceptor cell maintenance"/>
    <property type="evidence" value="ECO:0000315"/>
    <property type="project" value="MGI"/>
</dbReference>
<dbReference type="GO" id="GO:0032786">
    <property type="term" value="P:positive regulation of DNA-templated transcription, elongation"/>
    <property type="evidence" value="ECO:0007669"/>
    <property type="project" value="Ensembl"/>
</dbReference>
<dbReference type="GO" id="GO:1905168">
    <property type="term" value="P:positive regulation of double-strand break repair via homologous recombination"/>
    <property type="evidence" value="ECO:0000250"/>
    <property type="project" value="UniProtKB"/>
</dbReference>
<dbReference type="GO" id="GO:0045943">
    <property type="term" value="P:positive regulation of transcription by RNA polymerase I"/>
    <property type="evidence" value="ECO:0000303"/>
    <property type="project" value="ComplexPortal"/>
</dbReference>
<dbReference type="GO" id="GO:0045944">
    <property type="term" value="P:positive regulation of transcription by RNA polymerase II"/>
    <property type="evidence" value="ECO:0000303"/>
    <property type="project" value="ComplexPortal"/>
</dbReference>
<dbReference type="GO" id="GO:0045945">
    <property type="term" value="P:positive regulation of transcription by RNA polymerase III"/>
    <property type="evidence" value="ECO:0000266"/>
    <property type="project" value="ComplexPortal"/>
</dbReference>
<dbReference type="GO" id="GO:0060261">
    <property type="term" value="P:positive regulation of transcription initiation by RNA polymerase II"/>
    <property type="evidence" value="ECO:0000315"/>
    <property type="project" value="MGI"/>
</dbReference>
<dbReference type="GO" id="GO:0006290">
    <property type="term" value="P:pyrimidine dimer repair"/>
    <property type="evidence" value="ECO:0000315"/>
    <property type="project" value="MGI"/>
</dbReference>
<dbReference type="GO" id="GO:0034243">
    <property type="term" value="P:regulation of transcription elongation by RNA polymerase II"/>
    <property type="evidence" value="ECO:0007669"/>
    <property type="project" value="Ensembl"/>
</dbReference>
<dbReference type="GO" id="GO:0010332">
    <property type="term" value="P:response to gamma radiation"/>
    <property type="evidence" value="ECO:0000315"/>
    <property type="project" value="MGI"/>
</dbReference>
<dbReference type="GO" id="GO:0006979">
    <property type="term" value="P:response to oxidative stress"/>
    <property type="evidence" value="ECO:0000315"/>
    <property type="project" value="MGI"/>
</dbReference>
<dbReference type="GO" id="GO:0000303">
    <property type="term" value="P:response to superoxide"/>
    <property type="evidence" value="ECO:0000315"/>
    <property type="project" value="MGI"/>
</dbReference>
<dbReference type="GO" id="GO:0009636">
    <property type="term" value="P:response to toxic substance"/>
    <property type="evidence" value="ECO:0000315"/>
    <property type="project" value="MGI"/>
</dbReference>
<dbReference type="GO" id="GO:0009411">
    <property type="term" value="P:response to UV"/>
    <property type="evidence" value="ECO:0000315"/>
    <property type="project" value="MGI"/>
</dbReference>
<dbReference type="GO" id="GO:0010224">
    <property type="term" value="P:response to UV-B"/>
    <property type="evidence" value="ECO:0000315"/>
    <property type="project" value="MGI"/>
</dbReference>
<dbReference type="GO" id="GO:0010165">
    <property type="term" value="P:response to X-ray"/>
    <property type="evidence" value="ECO:0000315"/>
    <property type="project" value="MGI"/>
</dbReference>
<dbReference type="GO" id="GO:0000012">
    <property type="term" value="P:single strand break repair"/>
    <property type="evidence" value="ECO:0000250"/>
    <property type="project" value="UniProtKB"/>
</dbReference>
<dbReference type="GO" id="GO:0006362">
    <property type="term" value="P:transcription elongation by RNA polymerase I"/>
    <property type="evidence" value="ECO:0000315"/>
    <property type="project" value="MGI"/>
</dbReference>
<dbReference type="GO" id="GO:0006283">
    <property type="term" value="P:transcription-coupled nucleotide-excision repair"/>
    <property type="evidence" value="ECO:0000315"/>
    <property type="project" value="MGI"/>
</dbReference>
<dbReference type="CDD" id="cd21397">
    <property type="entry name" value="cc_ERCC-6_N"/>
    <property type="match status" value="1"/>
</dbReference>
<dbReference type="CDD" id="cd22254">
    <property type="entry name" value="CSB_WHD"/>
    <property type="match status" value="1"/>
</dbReference>
<dbReference type="CDD" id="cd18000">
    <property type="entry name" value="DEXHc_ERCC6"/>
    <property type="match status" value="1"/>
</dbReference>
<dbReference type="CDD" id="cd18793">
    <property type="entry name" value="SF2_C_SNF"/>
    <property type="match status" value="1"/>
</dbReference>
<dbReference type="FunFam" id="3.40.50.300:FF:000863">
    <property type="entry name" value="DNA excision repair protein ERCC-6"/>
    <property type="match status" value="1"/>
</dbReference>
<dbReference type="FunFam" id="3.40.50.10810:FF:000042">
    <property type="entry name" value="SNF2 family helicase-like protein"/>
    <property type="match status" value="1"/>
</dbReference>
<dbReference type="Gene3D" id="3.40.50.300">
    <property type="entry name" value="P-loop containing nucleotide triphosphate hydrolases"/>
    <property type="match status" value="1"/>
</dbReference>
<dbReference type="Gene3D" id="3.40.50.10810">
    <property type="entry name" value="Tandem AAA-ATPase domain"/>
    <property type="match status" value="1"/>
</dbReference>
<dbReference type="InterPro" id="IPR014001">
    <property type="entry name" value="Helicase_ATP-bd"/>
</dbReference>
<dbReference type="InterPro" id="IPR001650">
    <property type="entry name" value="Helicase_C-like"/>
</dbReference>
<dbReference type="InterPro" id="IPR027417">
    <property type="entry name" value="P-loop_NTPase"/>
</dbReference>
<dbReference type="InterPro" id="IPR038718">
    <property type="entry name" value="SNF2-like_sf"/>
</dbReference>
<dbReference type="InterPro" id="IPR049730">
    <property type="entry name" value="SNF2/RAD54-like_C"/>
</dbReference>
<dbReference type="InterPro" id="IPR000330">
    <property type="entry name" value="SNF2_N"/>
</dbReference>
<dbReference type="InterPro" id="IPR050496">
    <property type="entry name" value="SNF2_RAD54_helicase_repair"/>
</dbReference>
<dbReference type="PANTHER" id="PTHR45629:SF7">
    <property type="entry name" value="DNA EXCISION REPAIR PROTEIN ERCC-6-RELATED"/>
    <property type="match status" value="1"/>
</dbReference>
<dbReference type="PANTHER" id="PTHR45629">
    <property type="entry name" value="SNF2/RAD54 FAMILY MEMBER"/>
    <property type="match status" value="1"/>
</dbReference>
<dbReference type="Pfam" id="PF00271">
    <property type="entry name" value="Helicase_C"/>
    <property type="match status" value="1"/>
</dbReference>
<dbReference type="Pfam" id="PF00176">
    <property type="entry name" value="SNF2-rel_dom"/>
    <property type="match status" value="1"/>
</dbReference>
<dbReference type="SMART" id="SM00487">
    <property type="entry name" value="DEXDc"/>
    <property type="match status" value="1"/>
</dbReference>
<dbReference type="SMART" id="SM00490">
    <property type="entry name" value="HELICc"/>
    <property type="match status" value="1"/>
</dbReference>
<dbReference type="SUPFAM" id="SSF52540">
    <property type="entry name" value="P-loop containing nucleoside triphosphate hydrolases"/>
    <property type="match status" value="2"/>
</dbReference>
<dbReference type="PROSITE" id="PS51192">
    <property type="entry name" value="HELICASE_ATP_BIND_1"/>
    <property type="match status" value="1"/>
</dbReference>
<dbReference type="PROSITE" id="PS51194">
    <property type="entry name" value="HELICASE_CTER"/>
    <property type="match status" value="1"/>
</dbReference>
<keyword id="KW-0067">ATP-binding</keyword>
<keyword id="KW-0158">Chromosome</keyword>
<keyword id="KW-0227">DNA damage</keyword>
<keyword id="KW-0234">DNA repair</keyword>
<keyword id="KW-0238">DNA-binding</keyword>
<keyword id="KW-0347">Helicase</keyword>
<keyword id="KW-0378">Hydrolase</keyword>
<keyword id="KW-1017">Isopeptide bond</keyword>
<keyword id="KW-0488">Methylation</keyword>
<keyword id="KW-0524">Neurogenesis</keyword>
<keyword id="KW-0547">Nucleotide-binding</keyword>
<keyword id="KW-0539">Nucleus</keyword>
<keyword id="KW-0597">Phosphoprotein</keyword>
<keyword id="KW-1185">Reference proteome</keyword>
<keyword id="KW-0804">Transcription</keyword>
<keyword id="KW-0805">Transcription regulation</keyword>
<keyword id="KW-0832">Ubl conjugation</keyword>
<name>ERCC6_MOUSE</name>
<accession>F8VPZ5</accession>
<accession>A3KMN2</accession>
<protein>
    <recommendedName>
        <fullName>DNA excision repair protein ERCC-6</fullName>
        <ecNumber evidence="1">3.6.4.-</ecNumber>
    </recommendedName>
    <alternativeName>
        <fullName>ATP-dependent helicase ERCC6</fullName>
    </alternativeName>
    <alternativeName>
        <fullName>Cockayne syndrome protein CSB</fullName>
    </alternativeName>
</protein>
<proteinExistence type="evidence at protein level"/>
<evidence type="ECO:0000250" key="1">
    <source>
        <dbReference type="UniProtKB" id="Q03468"/>
    </source>
</evidence>
<evidence type="ECO:0000255" key="2">
    <source>
        <dbReference type="PROSITE-ProRule" id="PRU00541"/>
    </source>
</evidence>
<evidence type="ECO:0000255" key="3">
    <source>
        <dbReference type="PROSITE-ProRule" id="PRU00542"/>
    </source>
</evidence>
<evidence type="ECO:0000256" key="4">
    <source>
        <dbReference type="SAM" id="MobiDB-lite"/>
    </source>
</evidence>
<evidence type="ECO:0000305" key="5"/>
<reference key="1">
    <citation type="journal article" date="2009" name="PLoS Biol.">
        <title>Lineage-specific biology revealed by a finished genome assembly of the mouse.</title>
        <authorList>
            <person name="Church D.M."/>
            <person name="Goodstadt L."/>
            <person name="Hillier L.W."/>
            <person name="Zody M.C."/>
            <person name="Goldstein S."/>
            <person name="She X."/>
            <person name="Bult C.J."/>
            <person name="Agarwala R."/>
            <person name="Cherry J.L."/>
            <person name="DiCuccio M."/>
            <person name="Hlavina W."/>
            <person name="Kapustin Y."/>
            <person name="Meric P."/>
            <person name="Maglott D."/>
            <person name="Birtle Z."/>
            <person name="Marques A.C."/>
            <person name="Graves T."/>
            <person name="Zhou S."/>
            <person name="Teague B."/>
            <person name="Potamousis K."/>
            <person name="Churas C."/>
            <person name="Place M."/>
            <person name="Herschleb J."/>
            <person name="Runnheim R."/>
            <person name="Forrest D."/>
            <person name="Amos-Landgraf J."/>
            <person name="Schwartz D.C."/>
            <person name="Cheng Z."/>
            <person name="Lindblad-Toh K."/>
            <person name="Eichler E.E."/>
            <person name="Ponting C.P."/>
        </authorList>
    </citation>
    <scope>NUCLEOTIDE SEQUENCE [LARGE SCALE GENOMIC DNA]</scope>
    <source>
        <strain>C57BL/6J</strain>
    </source>
</reference>
<reference key="2">
    <citation type="journal article" date="2004" name="Genome Res.">
        <title>The status, quality, and expansion of the NIH full-length cDNA project: the Mammalian Gene Collection (MGC).</title>
        <authorList>
            <consortium name="The MGC Project Team"/>
        </authorList>
    </citation>
    <scope>NUCLEOTIDE SEQUENCE [LARGE SCALE MRNA] OF 325-1481</scope>
    <source>
        <tissue>Brain</tissue>
    </source>
</reference>
<reference key="3">
    <citation type="journal article" date="2010" name="Cell">
        <title>A tissue-specific atlas of mouse protein phosphorylation and expression.</title>
        <authorList>
            <person name="Huttlin E.L."/>
            <person name="Jedrychowski M.P."/>
            <person name="Elias J.E."/>
            <person name="Goswami T."/>
            <person name="Rad R."/>
            <person name="Beausoleil S.A."/>
            <person name="Villen J."/>
            <person name="Haas W."/>
            <person name="Sowa M.E."/>
            <person name="Gygi S.P."/>
        </authorList>
    </citation>
    <scope>IDENTIFICATION BY MASS SPECTROMETRY [LARGE SCALE ANALYSIS]</scope>
</reference>
<sequence length="1481" mass="165958">MFHEEVPNSTHPQEQDCLPSQHANAYKDMPVGQENGGVSEAGECLSSTSCEYGPSTSAEACVLAATRRGPTLLHIDRHQIPAVEPSAQALELQGLGVDVYDQAVLEQGVLQQVDSAMHEASCVAQLADAEKEYQSVLDDLMSCTTSLRQINKIIEQLSPQAASNRDINRKLDSVKRQKYNKEQQLKKITAKQKRLQAILGGAGVQVELDHASLEEDDAEPGPSCLGSMLMPAQETAWEELIRTGQMTPFGTPAPQKQEKKPRKIMLNEASGFEKYLAEQAQLSFERKKQAATKRTAKKAIVISESSRAAIETKADQRSQVLSQTDKRLKKHSRKLQRRALQFQGKVGLPSGKKPLEPEVRPEAEGDTEGEESGSSPTDGEEEEEQEEEEGVASLSSDDVSYELKPLRKRQKYQKKVPVQEIDDDFFPSSEEEDEAMEGRGGGRKVARRQDDGDEDYYKQRLRRWNRLRLQDKEKRLKLEDDSEESDAEFDEGFKVPGFLFKKLFKYQQTGVRWLWELHCQQAGGILGDEMGLGKTIQIIAFLAGLSYSKIRTRGSNYRFEGLGPTIIVCPTTVMHQWVKEFHTWWPPFRVAVLHETGSYTHKKERLIRDIVYCHGVLITSYSYIRLMQDDISRHDWHYVILDEGHKIRNPNAAVTLACKQFRTPHRIILSGSPMQNNLRELWSLFDFIFPGKLGTLPVFMEQFSVPITMGGYSNASPVQVKTAYKCACVLRDTINPYLLRRMKSDVKMSLSLPDKNEQVLFCRLTDEQHKVYQNFIDSKAVYRILNGENQIFSGLVALRKICNHPDLFSGGPKNASGPPEDELEEEQFGHWRRSGKMIVVESLLKIWHRQGQRVLLFSQSRQMLHILEVFLRAHKYSYLKMDGTTTIASRQPLITKYNEDTSIFVFLLTTRVGGLGVNLTGANRVIIYDPDWNPSTDTQARERAWRIGQKKQVTVYRLLTAGTIEEKIYHRQIFKQFLTNRVLKDPKQRRFFKSNDLYELFTLTSPDASQGTETSAIFAGTGSSIQTPKCQLKKRTSTVLGTDPKCKKPPVSDTPANAATLIGEKPKAAGATGRSVTSGESGPFKGDHDTNGNRASSVAFGEETDAGSTLEHLSVMSGDGKHSDSPTVDHTSRPPVEASTSEKQGSSYAGARCQAQTEPVPMSEQMEGQFSKYKSKRKHDASEEETTEKRPQPKQKAKNSKHCRDAKFEGTRVPHLVKKRRYRQQTSEQEGGAKDRSSDDYVLEKLFKKSVGVHSVVRHDAIIDGSSPDYVLVEAEANRVAQDALKALRLSRQQCLGAASGVPTWTGHRGISGAPTGVKNRFGQKRDSSLPVQHPSSLTEKTQNNMKKEGKAHTPEHFSGKEDGASVSGAPSSSSLLARMRARNHMILPERLESDSEHLAEAAAVPPCGTEHDDLLVDMRNFIAFQAQVDGQASTQEILQEFESKLSVAQSCVFRELLRNLCNFHRTPGGEGIWKLKPEYC</sequence>